<comment type="function">
    <text evidence="4 6 7 8 9 10 11 12">Transcriptional regulator implicated in neuronal determination. Mediates calcium-dependent transcription activation by binding to E box-containing promoter. Critical factor essential for the repression of the genetic program for neuronal differentiation; prevents the formation of synaptic vesicle clustering at active zone to the presynaptic membrane in postmitotic neurons. Induces transcription of ZEB1, which in turn represses neuronal differentiation by down-regulating REST expression. Plays a role in the establishment and maturation of thalamocortical connections; involved in the segregation of thalamic afferents into distinct barrel domains within layer VI of the somatosensory cortex. Involved in the development of the cerebellar and hippocampal granular neurons, neurons in the basolateral nucleus of amygdala and the hypothalamic-pituitary axis. Associates with chromatin to the DPYSL3 E box-containing promoter.</text>
</comment>
<comment type="subunit">
    <text evidence="10 11">Interacts with TCF3, TCF4 and TCF12. Interacts with CDC20. Efficient DNA-binding and transcription activation require dimerization with another bHLH protein.</text>
</comment>
<comment type="subcellular location">
    <subcellularLocation>
        <location evidence="2 4 9">Nucleus</location>
    </subcellularLocation>
</comment>
<comment type="tissue specificity">
    <text evidence="6 8 12">Expressed in the external germinal layer (EGL) and internal granular layer (IGL) of the cerebellum (at protein level). Expressed in layers V and VI of the neocortex at postnatal day 1. Expressed in all layers of the neocortex at postnatal day 4. Strongly expressed in layer IV of the neocortex, particularly in the barrel cortex at postnatal day 7. Expressed in the CA1, CA2 and CA3 and dentate gyrus of the hippocampus and many nuclei such as the habenular thalamic nuclei, paraventricular hypothalamic nuclei, amygdala nuclei, and pyramidal nucleus. Expressed in granule cells, molecular layer neurons, and deep cerebella nuclei of the cerebellum. Expressed in brainstem neurons in the external cuneate nucleus and central gray.</text>
</comment>
<comment type="developmental stage">
    <text evidence="7 10">Expressed in dorsal and ventral parts of the lateral, basolateral and basomedial amygdala at 17 and 18 dpc (at protein level). Initially expressed in embryo at 11 dpc, with persistent expression in the nervous system until birth.</text>
</comment>
<comment type="domain">
    <text>The C-terminal region is necessary for depolarization-induced and calcium-dependent transcription activation.</text>
</comment>
<comment type="PTM">
    <text evidence="11">Ubiquitinated by the APC/C complex; leading to its degradation in neurons. The CDC20-APC/C-induced degradation of NEUROD2 drives presynaptic differentiation.</text>
</comment>
<comment type="disruption phenotype">
    <text evidence="5 6 7 8">Mice exhibit small brains, ataxia, reduced seizure threshold, growth failure, and postnatal premature death. Show excessive apoptosis in central nervous system. Lacks nuclei of the lateral and basolateral amygdala. Organization of cortical neurons into barrel structures is disrupted; thalamocortical axon terminals fail to segregate in the somatosensory cortex.</text>
</comment>
<dbReference type="EMBL" id="U58471">
    <property type="protein sequence ID" value="AAC26057.1"/>
    <property type="molecule type" value="mRNA"/>
</dbReference>
<dbReference type="EMBL" id="D83507">
    <property type="protein sequence ID" value="BAA11931.1"/>
    <property type="molecule type" value="mRNA"/>
</dbReference>
<dbReference type="EMBL" id="AB027126">
    <property type="protein sequence ID" value="BAA96490.1"/>
    <property type="molecule type" value="Genomic_DNA"/>
</dbReference>
<dbReference type="EMBL" id="BC058965">
    <property type="protein sequence ID" value="AAH58965.1"/>
    <property type="molecule type" value="mRNA"/>
</dbReference>
<dbReference type="CCDS" id="CCDS25343.1"/>
<dbReference type="PIR" id="JC4688">
    <property type="entry name" value="JC4688"/>
</dbReference>
<dbReference type="RefSeq" id="NP_035025.3">
    <property type="nucleotide sequence ID" value="NM_010895.3"/>
</dbReference>
<dbReference type="RefSeq" id="XP_030101503.1">
    <property type="nucleotide sequence ID" value="XM_030245643.2"/>
</dbReference>
<dbReference type="SMR" id="Q62414"/>
<dbReference type="FunCoup" id="Q62414">
    <property type="interactions" value="939"/>
</dbReference>
<dbReference type="STRING" id="10090.ENSMUSP00000041373"/>
<dbReference type="iPTMnet" id="Q62414"/>
<dbReference type="PhosphoSitePlus" id="Q62414"/>
<dbReference type="jPOST" id="Q62414"/>
<dbReference type="PaxDb" id="10090-ENSMUSP00000041373"/>
<dbReference type="ProteomicsDB" id="293533"/>
<dbReference type="Antibodypedia" id="16207">
    <property type="antibodies" value="204 antibodies from 34 providers"/>
</dbReference>
<dbReference type="DNASU" id="18013"/>
<dbReference type="Ensembl" id="ENSMUST00000041685.7">
    <property type="protein sequence ID" value="ENSMUSP00000041373.7"/>
    <property type="gene ID" value="ENSMUSG00000038255.7"/>
</dbReference>
<dbReference type="GeneID" id="18013"/>
<dbReference type="KEGG" id="mmu:18013"/>
<dbReference type="UCSC" id="uc009vai.1">
    <property type="organism name" value="mouse"/>
</dbReference>
<dbReference type="AGR" id="MGI:107755"/>
<dbReference type="CTD" id="4761"/>
<dbReference type="MGI" id="MGI:107755">
    <property type="gene designation" value="Neurod2"/>
</dbReference>
<dbReference type="VEuPathDB" id="HostDB:ENSMUSG00000038255"/>
<dbReference type="eggNOG" id="KOG3898">
    <property type="taxonomic scope" value="Eukaryota"/>
</dbReference>
<dbReference type="GeneTree" id="ENSGT00940000160871"/>
<dbReference type="HOGENOM" id="CLU_055134_0_1_1"/>
<dbReference type="InParanoid" id="Q62414"/>
<dbReference type="OMA" id="LPYDMHL"/>
<dbReference type="OrthoDB" id="10039134at2759"/>
<dbReference type="PhylomeDB" id="Q62414"/>
<dbReference type="TreeFam" id="TF315153"/>
<dbReference type="BioGRID-ORCS" id="18013">
    <property type="hits" value="1 hit in 78 CRISPR screens"/>
</dbReference>
<dbReference type="ChiTaRS" id="Neurod2">
    <property type="organism name" value="mouse"/>
</dbReference>
<dbReference type="PRO" id="PR:Q62414"/>
<dbReference type="Proteomes" id="UP000000589">
    <property type="component" value="Chromosome 11"/>
</dbReference>
<dbReference type="RNAct" id="Q62414">
    <property type="molecule type" value="protein"/>
</dbReference>
<dbReference type="Bgee" id="ENSMUSG00000038255">
    <property type="expression patterns" value="Expressed in cortical plate and 54 other cell types or tissues"/>
</dbReference>
<dbReference type="ExpressionAtlas" id="Q62414">
    <property type="expression patterns" value="baseline and differential"/>
</dbReference>
<dbReference type="GO" id="GO:0005634">
    <property type="term" value="C:nucleus"/>
    <property type="evidence" value="ECO:0000314"/>
    <property type="project" value="UniProtKB"/>
</dbReference>
<dbReference type="GO" id="GO:0003677">
    <property type="term" value="F:DNA binding"/>
    <property type="evidence" value="ECO:0000314"/>
    <property type="project" value="MGI"/>
</dbReference>
<dbReference type="GO" id="GO:0001228">
    <property type="term" value="F:DNA-binding transcription activator activity, RNA polymerase II-specific"/>
    <property type="evidence" value="ECO:0000314"/>
    <property type="project" value="NTNU_SB"/>
</dbReference>
<dbReference type="GO" id="GO:0003700">
    <property type="term" value="F:DNA-binding transcription factor activity"/>
    <property type="evidence" value="ECO:0000314"/>
    <property type="project" value="GO_Central"/>
</dbReference>
<dbReference type="GO" id="GO:0070888">
    <property type="term" value="F:E-box binding"/>
    <property type="evidence" value="ECO:0000314"/>
    <property type="project" value="UniProtKB"/>
</dbReference>
<dbReference type="GO" id="GO:0046982">
    <property type="term" value="F:protein heterodimerization activity"/>
    <property type="evidence" value="ECO:0000314"/>
    <property type="project" value="UniProtKB"/>
</dbReference>
<dbReference type="GO" id="GO:0000977">
    <property type="term" value="F:RNA polymerase II transcription regulatory region sequence-specific DNA binding"/>
    <property type="evidence" value="ECO:0000314"/>
    <property type="project" value="NTNU_SB"/>
</dbReference>
<dbReference type="GO" id="GO:0008306">
    <property type="term" value="P:associative learning"/>
    <property type="evidence" value="ECO:0000315"/>
    <property type="project" value="MGI"/>
</dbReference>
<dbReference type="GO" id="GO:0001662">
    <property type="term" value="P:behavioral fear response"/>
    <property type="evidence" value="ECO:0000315"/>
    <property type="project" value="MGI"/>
</dbReference>
<dbReference type="GO" id="GO:0071277">
    <property type="term" value="P:cellular response to calcium ion"/>
    <property type="evidence" value="ECO:0000314"/>
    <property type="project" value="UniProtKB"/>
</dbReference>
<dbReference type="GO" id="GO:0071257">
    <property type="term" value="P:cellular response to electrical stimulus"/>
    <property type="evidence" value="ECO:0000314"/>
    <property type="project" value="UniProtKB"/>
</dbReference>
<dbReference type="GO" id="GO:0021695">
    <property type="term" value="P:cerebellar cortex development"/>
    <property type="evidence" value="ECO:0000315"/>
    <property type="project" value="UniProtKB"/>
</dbReference>
<dbReference type="GO" id="GO:2000297">
    <property type="term" value="P:negative regulation of synapse maturation"/>
    <property type="evidence" value="ECO:0000314"/>
    <property type="project" value="UniProtKB"/>
</dbReference>
<dbReference type="GO" id="GO:0048666">
    <property type="term" value="P:neuron development"/>
    <property type="evidence" value="ECO:0000315"/>
    <property type="project" value="MGI"/>
</dbReference>
<dbReference type="GO" id="GO:0050850">
    <property type="term" value="P:positive regulation of calcium-mediated signaling"/>
    <property type="evidence" value="ECO:0000314"/>
    <property type="project" value="UniProtKB"/>
</dbReference>
<dbReference type="GO" id="GO:0051091">
    <property type="term" value="P:positive regulation of DNA-binding transcription factor activity"/>
    <property type="evidence" value="ECO:0000314"/>
    <property type="project" value="UniProtKB"/>
</dbReference>
<dbReference type="GO" id="GO:0045666">
    <property type="term" value="P:positive regulation of neuron differentiation"/>
    <property type="evidence" value="ECO:0000314"/>
    <property type="project" value="UniProtKB"/>
</dbReference>
<dbReference type="GO" id="GO:0090129">
    <property type="term" value="P:positive regulation of synapse maturation"/>
    <property type="evidence" value="ECO:0000315"/>
    <property type="project" value="UniProtKB"/>
</dbReference>
<dbReference type="GO" id="GO:0031915">
    <property type="term" value="P:positive regulation of synaptic plasticity"/>
    <property type="evidence" value="ECO:0000314"/>
    <property type="project" value="UniProtKB"/>
</dbReference>
<dbReference type="GO" id="GO:0045944">
    <property type="term" value="P:positive regulation of transcription by RNA polymerase II"/>
    <property type="evidence" value="ECO:0000314"/>
    <property type="project" value="NTNU_SB"/>
</dbReference>
<dbReference type="GO" id="GO:0016567">
    <property type="term" value="P:protein ubiquitination"/>
    <property type="evidence" value="ECO:0000314"/>
    <property type="project" value="UniProtKB"/>
</dbReference>
<dbReference type="CDD" id="cd19720">
    <property type="entry name" value="bHLH_TS_NeuroD2"/>
    <property type="match status" value="1"/>
</dbReference>
<dbReference type="FunFam" id="4.10.280.10:FF:000006">
    <property type="entry name" value="Neurogenic differentiation factor"/>
    <property type="match status" value="1"/>
</dbReference>
<dbReference type="Gene3D" id="4.10.280.10">
    <property type="entry name" value="Helix-loop-helix DNA-binding domain"/>
    <property type="match status" value="1"/>
</dbReference>
<dbReference type="InterPro" id="IPR011598">
    <property type="entry name" value="bHLH_dom"/>
</dbReference>
<dbReference type="InterPro" id="IPR050359">
    <property type="entry name" value="bHLH_transcription_factors"/>
</dbReference>
<dbReference type="InterPro" id="IPR036638">
    <property type="entry name" value="HLH_DNA-bd_sf"/>
</dbReference>
<dbReference type="InterPro" id="IPR022575">
    <property type="entry name" value="NeuroD_DUF"/>
</dbReference>
<dbReference type="InterPro" id="IPR016637">
    <property type="entry name" value="TF_bHLH_NeuroD"/>
</dbReference>
<dbReference type="PANTHER" id="PTHR19290">
    <property type="entry name" value="BASIC HELIX-LOOP-HELIX PROTEIN NEUROGENIN-RELATED"/>
    <property type="match status" value="1"/>
</dbReference>
<dbReference type="PANTHER" id="PTHR19290:SF83">
    <property type="entry name" value="NEUROGENIC DIFFERENTIATION FACTOR 2"/>
    <property type="match status" value="1"/>
</dbReference>
<dbReference type="Pfam" id="PF00010">
    <property type="entry name" value="HLH"/>
    <property type="match status" value="1"/>
</dbReference>
<dbReference type="Pfam" id="PF12533">
    <property type="entry name" value="Neuro_bHLH"/>
    <property type="match status" value="1"/>
</dbReference>
<dbReference type="PIRSF" id="PIRSF015618">
    <property type="entry name" value="bHLH_NeuroD"/>
    <property type="match status" value="1"/>
</dbReference>
<dbReference type="SMART" id="SM00353">
    <property type="entry name" value="HLH"/>
    <property type="match status" value="1"/>
</dbReference>
<dbReference type="SUPFAM" id="SSF47459">
    <property type="entry name" value="HLH, helix-loop-helix DNA-binding domain"/>
    <property type="match status" value="1"/>
</dbReference>
<dbReference type="PROSITE" id="PS50888">
    <property type="entry name" value="BHLH"/>
    <property type="match status" value="1"/>
</dbReference>
<gene>
    <name type="primary">Neurod2</name>
    <name type="synonym">Ndrf</name>
</gene>
<accession>Q62414</accession>
<accession>Q61952</accession>
<accession>Q925V5</accession>
<proteinExistence type="evidence at protein level"/>
<evidence type="ECO:0000255" key="1"/>
<evidence type="ECO:0000255" key="2">
    <source>
        <dbReference type="PROSITE-ProRule" id="PRU00981"/>
    </source>
</evidence>
<evidence type="ECO:0000256" key="3">
    <source>
        <dbReference type="SAM" id="MobiDB-lite"/>
    </source>
</evidence>
<evidence type="ECO:0000269" key="4">
    <source>
    </source>
</evidence>
<evidence type="ECO:0000269" key="5">
    <source>
    </source>
</evidence>
<evidence type="ECO:0000269" key="6">
    <source>
    </source>
</evidence>
<evidence type="ECO:0000269" key="7">
    <source>
    </source>
</evidence>
<evidence type="ECO:0000269" key="8">
    <source>
    </source>
</evidence>
<evidence type="ECO:0000269" key="9">
    <source>
    </source>
</evidence>
<evidence type="ECO:0000269" key="10">
    <source>
    </source>
</evidence>
<evidence type="ECO:0000269" key="11">
    <source>
    </source>
</evidence>
<evidence type="ECO:0000269" key="12">
    <source>
    </source>
</evidence>
<evidence type="ECO:0000305" key="13"/>
<name>NDF2_MOUSE</name>
<organism>
    <name type="scientific">Mus musculus</name>
    <name type="common">Mouse</name>
    <dbReference type="NCBI Taxonomy" id="10090"/>
    <lineage>
        <taxon>Eukaryota</taxon>
        <taxon>Metazoa</taxon>
        <taxon>Chordata</taxon>
        <taxon>Craniata</taxon>
        <taxon>Vertebrata</taxon>
        <taxon>Euteleostomi</taxon>
        <taxon>Mammalia</taxon>
        <taxon>Eutheria</taxon>
        <taxon>Euarchontoglires</taxon>
        <taxon>Glires</taxon>
        <taxon>Rodentia</taxon>
        <taxon>Myomorpha</taxon>
        <taxon>Muroidea</taxon>
        <taxon>Muridae</taxon>
        <taxon>Murinae</taxon>
        <taxon>Mus</taxon>
        <taxon>Mus</taxon>
    </lineage>
</organism>
<protein>
    <recommendedName>
        <fullName>Neurogenic differentiation factor 2</fullName>
        <shortName>NeuroD2</shortName>
    </recommendedName>
    <alternativeName>
        <fullName>NeuroD-related factor</fullName>
        <shortName>NDRF</shortName>
    </alternativeName>
</protein>
<keyword id="KW-0010">Activator</keyword>
<keyword id="KW-0217">Developmental protein</keyword>
<keyword id="KW-0221">Differentiation</keyword>
<keyword id="KW-0238">DNA-binding</keyword>
<keyword id="KW-0524">Neurogenesis</keyword>
<keyword id="KW-0539">Nucleus</keyword>
<keyword id="KW-1185">Reference proteome</keyword>
<keyword id="KW-0804">Transcription</keyword>
<keyword id="KW-0805">Transcription regulation</keyword>
<keyword id="KW-0832">Ubl conjugation</keyword>
<feature type="chain" id="PRO_0000127388" description="Neurogenic differentiation factor 2">
    <location>
        <begin position="1"/>
        <end position="383"/>
    </location>
</feature>
<feature type="domain" description="bHLH" evidence="2">
    <location>
        <begin position="122"/>
        <end position="174"/>
    </location>
</feature>
<feature type="region of interest" description="Disordered" evidence="3">
    <location>
        <begin position="1"/>
        <end position="130"/>
    </location>
</feature>
<feature type="short sequence motif" description="Nuclear localization signal" evidence="1">
    <location>
        <begin position="108"/>
        <end position="114"/>
    </location>
</feature>
<feature type="compositionally biased region" description="Low complexity" evidence="3">
    <location>
        <begin position="45"/>
        <end position="57"/>
    </location>
</feature>
<feature type="compositionally biased region" description="Acidic residues" evidence="3">
    <location>
        <begin position="79"/>
        <end position="98"/>
    </location>
</feature>
<feature type="compositionally biased region" description="Basic residues" evidence="3">
    <location>
        <begin position="102"/>
        <end position="114"/>
    </location>
</feature>
<feature type="mutagenesis site" description="Inhibits neurons differentiation." evidence="4">
    <original>ER</original>
    <variation>AQ</variation>
    <location>
        <begin position="131"/>
        <end position="132"/>
    </location>
</feature>
<feature type="sequence conflict" description="In Ref. 1; AAC26057." evidence="13" ref="1">
    <original>P</original>
    <variation>S</variation>
    <location>
        <position position="41"/>
    </location>
</feature>
<reference key="1">
    <citation type="journal article" date="1996" name="Mol. Cell. Biol.">
        <title>NeuroD2 and neuroD3: distinct expression patterns and transcriptional activation potentials within the neuroD gene family.</title>
        <authorList>
            <person name="McCormick M.B."/>
            <person name="Tamimi R.M."/>
            <person name="Snider L."/>
            <person name="Asakura A."/>
            <person name="Bergstrom D."/>
            <person name="Tapscott S.J."/>
        </authorList>
    </citation>
    <scope>NUCLEOTIDE SEQUENCE [MRNA]</scope>
</reference>
<reference key="2">
    <citation type="submission" date="1998-07" db="EMBL/GenBank/DDBJ databases">
        <authorList>
            <person name="Tapscott S.J."/>
            <person name="McCormick M.B."/>
            <person name="Tamimi R.T."/>
        </authorList>
    </citation>
    <scope>SEQUENCE REVISION TO 338-339</scope>
</reference>
<reference key="3">
    <citation type="journal article" date="1996" name="Biochem. Biophys. Res. Commun.">
        <title>Molecular cloning and characterization of a cDNA encoding a novel basic helix-loop-helix protein structurally related to Neuro-D/BHF1.</title>
        <authorList>
            <person name="Yasunami M."/>
            <person name="Suzuki K."/>
            <person name="Maruyama H."/>
            <person name="Kawakami H."/>
            <person name="Nagai Y."/>
            <person name="Hagiwara M."/>
            <person name="Ohkubo H."/>
        </authorList>
    </citation>
    <scope>NUCLEOTIDE SEQUENCE [MRNA]</scope>
    <source>
        <tissue>Embryo</tissue>
    </source>
</reference>
<reference key="4">
    <citation type="journal article" date="2000" name="Brain Res. Mol. Brain Res.">
        <title>Structure of the mouse NDRF gene and its regulation during neuronal differentiation of P19 cells.</title>
        <authorList>
            <person name="Oda H."/>
            <person name="Iwata I."/>
            <person name="Yasunami M."/>
            <person name="Ohkubo H."/>
        </authorList>
    </citation>
    <scope>NUCLEOTIDE SEQUENCE [GENOMIC DNA]</scope>
    <source>
        <strain>C57BL/6J</strain>
    </source>
</reference>
<reference key="5">
    <citation type="journal article" date="2004" name="Genome Res.">
        <title>The status, quality, and expansion of the NIH full-length cDNA project: the Mammalian Gene Collection (MGC).</title>
        <authorList>
            <consortium name="The MGC Project Team"/>
        </authorList>
    </citation>
    <scope>NUCLEOTIDE SEQUENCE [LARGE SCALE MRNA]</scope>
    <source>
        <strain>C57BL/6J</strain>
        <tissue>Brain</tissue>
    </source>
</reference>
<reference key="6">
    <citation type="journal article" date="2000" name="Development">
        <title>Generation of neurons by transient expression of neural bHLH proteins in mammalian cells.</title>
        <authorList>
            <person name="Farah M.H."/>
            <person name="Olson J.M."/>
            <person name="Sucic H.B."/>
            <person name="Hume R.I."/>
            <person name="Tapscott S.J."/>
            <person name="Turner D.L."/>
        </authorList>
    </citation>
    <scope>FUNCTION</scope>
    <scope>MUTAGENESIS OF 131-GLU-ARG-132</scope>
    <scope>SUBCELLULAR LOCATION</scope>
</reference>
<reference key="7">
    <citation type="journal article" date="2001" name="Dev. Biol.">
        <title>NeuroD2 is necessary for development and survival of central nervous system neurons.</title>
        <authorList>
            <person name="Olson J.M."/>
            <person name="Asakura A."/>
            <person name="Snider L."/>
            <person name="Hawkes R."/>
            <person name="Strand A."/>
            <person name="Stoeck J."/>
            <person name="Hallahan A."/>
            <person name="Pritchard J."/>
            <person name="Tapscott S.J."/>
        </authorList>
    </citation>
    <scope>DISRUPTION PHENOTYPE</scope>
</reference>
<reference key="8">
    <citation type="journal article" date="2004" name="Dev. Biol.">
        <title>Regulation of neuroD2 expression in mouse brain.</title>
        <authorList>
            <person name="Lin C.H."/>
            <person name="Stoeck J."/>
            <person name="Ravanpay A.C."/>
            <person name="Guillemot F."/>
            <person name="Tapscott S.J."/>
            <person name="Olson J.M."/>
        </authorList>
    </citation>
    <scope>FUNCTION</scope>
    <scope>DNA-BINDING</scope>
    <scope>TISSUE SPECIFICITY</scope>
    <scope>DISRUPTION PHENOTYPE</scope>
</reference>
<reference key="9">
    <citation type="journal article" date="2005" name="Proc. Natl. Acad. Sci. U.S.A.">
        <title>The dosage of the neuroD2 transcription factor regulates amygdala development and emotional learning.</title>
        <authorList>
            <person name="Lin C.H."/>
            <person name="Hansen S."/>
            <person name="Wang Z."/>
            <person name="Storm D.R."/>
            <person name="Tapscott S.J."/>
            <person name="Olson J.M."/>
        </authorList>
    </citation>
    <scope>FUNCTION</scope>
    <scope>CHROMATIN-BINDING</scope>
    <scope>DISRUPTION PHENOTYPE</scope>
    <scope>DEVELOPMENTAL STAGE</scope>
</reference>
<reference key="10">
    <citation type="journal article" date="2006" name="Neuron">
        <title>Regulation of thalamocortical patterning and synaptic maturation by NeuroD2.</title>
        <authorList>
            <person name="Ince-Dunn G."/>
            <person name="Hall B.J."/>
            <person name="Hu S.C."/>
            <person name="Ripley B."/>
            <person name="Huganir R.L."/>
            <person name="Olson J.M."/>
            <person name="Tapscott S.J."/>
            <person name="Ghosh A."/>
        </authorList>
    </citation>
    <scope>FUNCTION</scope>
    <scope>DISRUPTION PHENOTYPE</scope>
    <scope>TISSUE SPECIFICITY</scope>
</reference>
<reference key="11">
    <citation type="journal article" date="2006" name="J. Biotechnol.">
        <title>Transduction of NeuroD2 protein induced neural cell differentiation.</title>
        <authorList>
            <person name="Noda T."/>
            <person name="Kawamura R."/>
            <person name="Funabashi H."/>
            <person name="Mie M."/>
            <person name="Kobatake E."/>
        </authorList>
    </citation>
    <scope>FUNCTION</scope>
    <scope>SUBCELLULAR LOCATION</scope>
</reference>
<reference key="12">
    <citation type="journal article" date="2008" name="J. Neurosci. Res.">
        <title>E protein dosage influences brain development more than family member identity.</title>
        <authorList>
            <person name="Ravanpay A.C."/>
            <person name="Olson J.M."/>
        </authorList>
    </citation>
    <scope>FUNCTION</scope>
    <scope>INTERACTION WITH TCF3; TCF4 AND TCF12</scope>
    <scope>DNA-BINDING</scope>
    <scope>DEVELOPMENTAL STAGE</scope>
</reference>
<reference key="13">
    <citation type="journal article" date="2009" name="Science">
        <title>A Cdc20-APC ubiquitin signaling pathway regulates presynaptic differentiation.</title>
        <authorList>
            <person name="Yang Y."/>
            <person name="Kim A.H."/>
            <person name="Yamada T."/>
            <person name="Wu B."/>
            <person name="Bilimoria P.M."/>
            <person name="Ikeuchi Y."/>
            <person name="de la Iglesia N."/>
            <person name="Shen J."/>
            <person name="Bonni A."/>
        </authorList>
    </citation>
    <scope>FUNCTION</scope>
    <scope>INTERACTION WITH CDC20</scope>
    <scope>UBIQUITINATION</scope>
</reference>
<reference key="14">
    <citation type="journal article" date="2010" name="Mol. Cell. Neurosci.">
        <title>Transcriptional inhibition of REST by NeuroD2 during neuronal differentiation.</title>
        <authorList>
            <person name="Ravanpay A.C."/>
            <person name="Hansen S.J."/>
            <person name="Olson J.M."/>
        </authorList>
    </citation>
    <scope>FUNCTION</scope>
    <scope>TISSUE SPECIFICITY</scope>
</reference>
<sequence>MLTRLFSEPGLLSDVPKFASWGDGDDDEPRSDKGDAPPQPPPAPGSGAPGPARAAKPVSLRGGEEIPEPTLAEVKEEGELGGEEEEEEEEEEGLDEAEGERPKKRGPKKRKMTKARLERSKLRRQKANARERNRMHDLNAALDNLRKVVPCYSKTQKLSKIETLRLAKNYIWALSEILRSGKRPDLVSYVQTLCKGLSQPTTNLVAGCLQLNSRNFLTEQGADGAGRFHGSGGPFAMHPYPYPCSRLAGAQCQAAGGLGGGAAHALRTHGYCAAYETLYAAAGGGGASPDYNSSEYEGPLSPPLCLNGNFSLKQDSSPDHEKSYHYSMHYSALPGSRPTGHGLVFGSSAVRGGVHSENLLSYDMHLHHDRGPMYEELNAFFHN</sequence>